<name>RL27_SALTI</name>
<comment type="similarity">
    <text evidence="2">Belongs to the bacterial ribosomal protein bL27 family.</text>
</comment>
<dbReference type="EMBL" id="AL513382">
    <property type="protein sequence ID" value="CAD07820.1"/>
    <property type="molecule type" value="Genomic_DNA"/>
</dbReference>
<dbReference type="EMBL" id="AE014613">
    <property type="protein sequence ID" value="AAO70756.1"/>
    <property type="molecule type" value="Genomic_DNA"/>
</dbReference>
<dbReference type="RefSeq" id="NP_457682.1">
    <property type="nucleotide sequence ID" value="NC_003198.1"/>
</dbReference>
<dbReference type="RefSeq" id="WP_000940593.1">
    <property type="nucleotide sequence ID" value="NZ_WSUR01000003.1"/>
</dbReference>
<dbReference type="SMR" id="P66132"/>
<dbReference type="STRING" id="220341.gene:17587333"/>
<dbReference type="GeneID" id="66757642"/>
<dbReference type="KEGG" id="stt:t3220"/>
<dbReference type="KEGG" id="sty:STY3482"/>
<dbReference type="PATRIC" id="fig|220341.7.peg.3546"/>
<dbReference type="eggNOG" id="COG0211">
    <property type="taxonomic scope" value="Bacteria"/>
</dbReference>
<dbReference type="HOGENOM" id="CLU_095424_4_1_6"/>
<dbReference type="OMA" id="GKDHTLH"/>
<dbReference type="OrthoDB" id="9803474at2"/>
<dbReference type="Proteomes" id="UP000000541">
    <property type="component" value="Chromosome"/>
</dbReference>
<dbReference type="Proteomes" id="UP000002670">
    <property type="component" value="Chromosome"/>
</dbReference>
<dbReference type="GO" id="GO:0022625">
    <property type="term" value="C:cytosolic large ribosomal subunit"/>
    <property type="evidence" value="ECO:0007669"/>
    <property type="project" value="TreeGrafter"/>
</dbReference>
<dbReference type="GO" id="GO:0003735">
    <property type="term" value="F:structural constituent of ribosome"/>
    <property type="evidence" value="ECO:0007669"/>
    <property type="project" value="InterPro"/>
</dbReference>
<dbReference type="GO" id="GO:0006412">
    <property type="term" value="P:translation"/>
    <property type="evidence" value="ECO:0007669"/>
    <property type="project" value="UniProtKB-UniRule"/>
</dbReference>
<dbReference type="FunFam" id="2.40.50.100:FF:000001">
    <property type="entry name" value="50S ribosomal protein L27"/>
    <property type="match status" value="1"/>
</dbReference>
<dbReference type="Gene3D" id="2.40.50.100">
    <property type="match status" value="1"/>
</dbReference>
<dbReference type="HAMAP" id="MF_00539">
    <property type="entry name" value="Ribosomal_bL27"/>
    <property type="match status" value="1"/>
</dbReference>
<dbReference type="InterPro" id="IPR001684">
    <property type="entry name" value="Ribosomal_bL27"/>
</dbReference>
<dbReference type="InterPro" id="IPR018261">
    <property type="entry name" value="Ribosomal_bL27_CS"/>
</dbReference>
<dbReference type="NCBIfam" id="TIGR00062">
    <property type="entry name" value="L27"/>
    <property type="match status" value="1"/>
</dbReference>
<dbReference type="PANTHER" id="PTHR15893:SF0">
    <property type="entry name" value="LARGE RIBOSOMAL SUBUNIT PROTEIN BL27M"/>
    <property type="match status" value="1"/>
</dbReference>
<dbReference type="PANTHER" id="PTHR15893">
    <property type="entry name" value="RIBOSOMAL PROTEIN L27"/>
    <property type="match status" value="1"/>
</dbReference>
<dbReference type="Pfam" id="PF01016">
    <property type="entry name" value="Ribosomal_L27"/>
    <property type="match status" value="1"/>
</dbReference>
<dbReference type="PRINTS" id="PR00063">
    <property type="entry name" value="RIBOSOMALL27"/>
</dbReference>
<dbReference type="SUPFAM" id="SSF110324">
    <property type="entry name" value="Ribosomal L27 protein-like"/>
    <property type="match status" value="1"/>
</dbReference>
<dbReference type="PROSITE" id="PS00831">
    <property type="entry name" value="RIBOSOMAL_L27"/>
    <property type="match status" value="1"/>
</dbReference>
<organism>
    <name type="scientific">Salmonella typhi</name>
    <dbReference type="NCBI Taxonomy" id="90370"/>
    <lineage>
        <taxon>Bacteria</taxon>
        <taxon>Pseudomonadati</taxon>
        <taxon>Pseudomonadota</taxon>
        <taxon>Gammaproteobacteria</taxon>
        <taxon>Enterobacterales</taxon>
        <taxon>Enterobacteriaceae</taxon>
        <taxon>Salmonella</taxon>
    </lineage>
</organism>
<feature type="initiator methionine" description="Removed" evidence="1">
    <location>
        <position position="1"/>
    </location>
</feature>
<feature type="chain" id="PRO_0000181159" description="Large ribosomal subunit protein bL27">
    <location>
        <begin position="2"/>
        <end position="85"/>
    </location>
</feature>
<feature type="region of interest" description="Disordered" evidence="3">
    <location>
        <begin position="1"/>
        <end position="20"/>
    </location>
</feature>
<protein>
    <recommendedName>
        <fullName evidence="2">Large ribosomal subunit protein bL27</fullName>
    </recommendedName>
    <alternativeName>
        <fullName evidence="4">50S ribosomal protein L27</fullName>
    </alternativeName>
</protein>
<keyword id="KW-0687">Ribonucleoprotein</keyword>
<keyword id="KW-0689">Ribosomal protein</keyword>
<sequence>MAHKKAGGSTRNGRDSEAKRLGVKRFGGEAVLAGSIIVRQRGTKFHAGTNVGCGRDHTLFAKADGKVKFEVKGPKNRKYISIVAE</sequence>
<proteinExistence type="inferred from homology"/>
<reference key="1">
    <citation type="journal article" date="2001" name="Nature">
        <title>Complete genome sequence of a multiple drug resistant Salmonella enterica serovar Typhi CT18.</title>
        <authorList>
            <person name="Parkhill J."/>
            <person name="Dougan G."/>
            <person name="James K.D."/>
            <person name="Thomson N.R."/>
            <person name="Pickard D."/>
            <person name="Wain J."/>
            <person name="Churcher C.M."/>
            <person name="Mungall K.L."/>
            <person name="Bentley S.D."/>
            <person name="Holden M.T.G."/>
            <person name="Sebaihia M."/>
            <person name="Baker S."/>
            <person name="Basham D."/>
            <person name="Brooks K."/>
            <person name="Chillingworth T."/>
            <person name="Connerton P."/>
            <person name="Cronin A."/>
            <person name="Davis P."/>
            <person name="Davies R.M."/>
            <person name="Dowd L."/>
            <person name="White N."/>
            <person name="Farrar J."/>
            <person name="Feltwell T."/>
            <person name="Hamlin N."/>
            <person name="Haque A."/>
            <person name="Hien T.T."/>
            <person name="Holroyd S."/>
            <person name="Jagels K."/>
            <person name="Krogh A."/>
            <person name="Larsen T.S."/>
            <person name="Leather S."/>
            <person name="Moule S."/>
            <person name="O'Gaora P."/>
            <person name="Parry C."/>
            <person name="Quail M.A."/>
            <person name="Rutherford K.M."/>
            <person name="Simmonds M."/>
            <person name="Skelton J."/>
            <person name="Stevens K."/>
            <person name="Whitehead S."/>
            <person name="Barrell B.G."/>
        </authorList>
    </citation>
    <scope>NUCLEOTIDE SEQUENCE [LARGE SCALE GENOMIC DNA]</scope>
    <source>
        <strain>CT18</strain>
    </source>
</reference>
<reference key="2">
    <citation type="journal article" date="2003" name="J. Bacteriol.">
        <title>Comparative genomics of Salmonella enterica serovar Typhi strains Ty2 and CT18.</title>
        <authorList>
            <person name="Deng W."/>
            <person name="Liou S.-R."/>
            <person name="Plunkett G. III"/>
            <person name="Mayhew G.F."/>
            <person name="Rose D.J."/>
            <person name="Burland V."/>
            <person name="Kodoyianni V."/>
            <person name="Schwartz D.C."/>
            <person name="Blattner F.R."/>
        </authorList>
    </citation>
    <scope>NUCLEOTIDE SEQUENCE [LARGE SCALE GENOMIC DNA]</scope>
    <source>
        <strain>ATCC 700931 / Ty2</strain>
    </source>
</reference>
<gene>
    <name evidence="2" type="primary">rpmA</name>
    <name type="ordered locus">STY3482</name>
    <name type="ordered locus">t3220</name>
</gene>
<accession>P66132</accession>
<accession>Q8XGK4</accession>
<evidence type="ECO:0000250" key="1"/>
<evidence type="ECO:0000255" key="2">
    <source>
        <dbReference type="HAMAP-Rule" id="MF_00539"/>
    </source>
</evidence>
<evidence type="ECO:0000256" key="3">
    <source>
        <dbReference type="SAM" id="MobiDB-lite"/>
    </source>
</evidence>
<evidence type="ECO:0000305" key="4"/>